<proteinExistence type="evidence at protein level"/>
<keyword id="KW-0002">3D-structure</keyword>
<keyword id="KW-0007">Acetylation</keyword>
<keyword id="KW-0010">Activator</keyword>
<keyword id="KW-0090">Biological rhythms</keyword>
<keyword id="KW-0963">Cytoplasm</keyword>
<keyword id="KW-1015">Disulfide bond</keyword>
<keyword id="KW-0238">DNA-binding</keyword>
<keyword id="KW-0349">Heme</keyword>
<keyword id="KW-0408">Iron</keyword>
<keyword id="KW-0479">Metal-binding</keyword>
<keyword id="KW-0539">Nucleus</keyword>
<keyword id="KW-0597">Phosphoprotein</keyword>
<keyword id="KW-1267">Proteomics identification</keyword>
<keyword id="KW-0675">Receptor</keyword>
<keyword id="KW-1185">Reference proteome</keyword>
<keyword id="KW-0678">Repressor</keyword>
<keyword id="KW-0804">Transcription</keyword>
<keyword id="KW-0805">Transcription regulation</keyword>
<keyword id="KW-0832">Ubl conjugation</keyword>
<keyword id="KW-0862">Zinc</keyword>
<keyword id="KW-0863">Zinc-finger</keyword>
<name>NR1D2_HUMAN</name>
<protein>
    <recommendedName>
        <fullName evidence="14">Nuclear receptor subfamily 1 group D member 2</fullName>
    </recommendedName>
    <alternativeName>
        <fullName>Orphan nuclear hormone receptor BD73</fullName>
    </alternativeName>
    <alternativeName>
        <fullName>Rev-erb alpha-related receptor</fullName>
        <shortName>RVR</shortName>
    </alternativeName>
    <alternativeName>
        <fullName>Rev-erb-beta</fullName>
    </alternativeName>
    <alternativeName>
        <fullName>V-erbA-related protein 1-related</fullName>
        <shortName>EAR-1R</shortName>
    </alternativeName>
</protein>
<comment type="function">
    <text evidence="2 9 10">Transcriptional repressor which coordinates circadian rhythm and metabolic pathways in a heme-dependent manner. Integral component of the complex transcription machinery that governs circadian rhythmicity and forms a critical negative limb of the circadian clock by directly repressing the expression of core clock components BMAL1 and CLOCK. Also regulates genes involved in metabolic functions, including lipid metabolism and the inflammatory response. Acts as a receptor for heme which stimulates its interaction with the NCOR1/HDAC3 corepressor complex, enhancing transcriptional repression. Recognizes two classes of DNA response elements within the promoter of its target genes and can bind to DNA as either monomers or homodimers, depending on the nature of the response element. Binds as a monomer to a response element composed of the consensus half-site motif 5'-[A/G]GGTCA-3' preceded by an A/T-rich 5' sequence (RevRE), or as a homodimer to a direct repeat of the core motif spaced by two nuclegotides (RevDR-2). Acts as a potent competitive repressor of ROR alpha (RORA) function and also negatively regulates the expression of NR1D1. Regulates lipid and energy homeostasis in the skeletal muscle via repression of genes involved in lipid metabolism and myogenesis including: CD36, FABP3, FABP4, UCP3, SCD1 and MSTN. Regulates hepatic lipid metabolism via the repression of APOC3. Represses gene expression at a distance in macrophages by inhibiting the transcription of enhancer-derived RNAs (eRNAs). In addition to its activity as a repressor, can also act as a transcriptional activator. Acts as a transcriptional activator of the sterol regulatory element-binding protein 1 (SREBF1) and the inflammatory mediator interleukin-6 (IL6) in the skeletal muscle (By similarity). Plays a role in the regulation of circadian sleep/wake cycle; essential for maintaining wakefulness during the dark phase or active period (By similarity). Key regulator of skeletal muscle mitochondrial function; negatively regulates the skeletal muscle expression of core clock genes and genes involved in mitochondrial biogenesis, fatty acid beta-oxidation and lipid metabolism (By similarity). May play a role in the circadian control of neutrophilic inflammation in the lung (By similarity).</text>
</comment>
<comment type="activity regulation">
    <text evidence="11">The heme-bound form can bind gaseous signaling molecules such as CO and nitric oxide (NO) and NO can reverse its transcriptional repressor activity.</text>
</comment>
<comment type="subunit">
    <text evidence="6 8 9 10 13">Binds DNA as a monomer or a homodimer (PubMed:17870090). Interacts with NCOA5 coactivator, leading to a strong increase of transcription of target genes (PubMed:11113208). Interacts (via N-terminus) with KAT5 (PubMed:17996965). Interacts (via C-terminus) with HDAC1 (PubMed:17996965). Interacts with ZNHIT1 (PubMed:17892483). Interacts with SIAH2 (PubMed:26392558).</text>
</comment>
<comment type="interaction">
    <interactant intactId="EBI-6144053">
        <id>Q14995</id>
    </interactant>
    <interactant intactId="EBI-10976677">
        <id>G5E9A7</id>
        <label>DMWD</label>
    </interactant>
    <organismsDiffer>false</organismsDiffer>
    <experiments>3</experiments>
</comment>
<comment type="interaction">
    <interactant intactId="EBI-6144053">
        <id>Q14995</id>
    </interactant>
    <interactant intactId="EBI-348399">
        <id>P22607</id>
        <label>FGFR3</label>
    </interactant>
    <organismsDiffer>false</organismsDiffer>
    <experiments>3</experiments>
</comment>
<comment type="interaction">
    <interactant intactId="EBI-6144053">
        <id>Q14995</id>
    </interactant>
    <interactant intactId="EBI-15639515">
        <id>O15354</id>
        <label>GPR37</label>
    </interactant>
    <organismsDiffer>false</organismsDiffer>
    <experiments>3</experiments>
</comment>
<comment type="interaction">
    <interactant intactId="EBI-6144053">
        <id>Q14995</id>
    </interactant>
    <interactant intactId="EBI-747754">
        <id>P28799</id>
        <label>GRN</label>
    </interactant>
    <organismsDiffer>false</organismsDiffer>
    <experiments>3</experiments>
</comment>
<comment type="interaction">
    <interactant intactId="EBI-6144053">
        <id>Q14995</id>
    </interactant>
    <interactant intactId="EBI-25860013">
        <id>P28799-2</id>
        <label>GRN</label>
    </interactant>
    <organismsDiffer>false</organismsDiffer>
    <experiments>3</experiments>
</comment>
<comment type="interaction">
    <interactant intactId="EBI-6144053">
        <id>Q14995</id>
    </interactant>
    <interactant intactId="EBI-351506">
        <id>P06396</id>
        <label>GSN</label>
    </interactant>
    <organismsDiffer>false</organismsDiffer>
    <experiments>3</experiments>
</comment>
<comment type="interaction">
    <interactant intactId="EBI-6144053">
        <id>Q14995</id>
    </interactant>
    <interactant intactId="EBI-352682">
        <id>P04792</id>
        <label>HSPB1</label>
    </interactant>
    <organismsDiffer>false</organismsDiffer>
    <experiments>3</experiments>
</comment>
<comment type="interaction">
    <interactant intactId="EBI-6144053">
        <id>Q14995</id>
    </interactant>
    <interactant intactId="EBI-10975473">
        <id>O60333-2</id>
        <label>KIF1B</label>
    </interactant>
    <organismsDiffer>false</organismsDiffer>
    <experiments>3</experiments>
</comment>
<comment type="interaction">
    <interactant intactId="EBI-6144053">
        <id>Q14995</id>
    </interactant>
    <interactant intactId="EBI-10178578">
        <id>I6L9F6</id>
        <label>NEFL</label>
    </interactant>
    <organismsDiffer>false</organismsDiffer>
    <experiments>3</experiments>
</comment>
<comment type="interaction">
    <interactant intactId="EBI-6144053">
        <id>Q14995</id>
    </interactant>
    <interactant intactId="EBI-50433196">
        <id>A0A6Q8PF08</id>
        <label>PMP22</label>
    </interactant>
    <organismsDiffer>false</organismsDiffer>
    <experiments>3</experiments>
</comment>
<comment type="interaction">
    <interactant intactId="EBI-6144053">
        <id>Q14995</id>
    </interactant>
    <interactant intactId="EBI-912440">
        <id>Q96LA8</id>
        <label>PRMT6</label>
    </interactant>
    <organismsDiffer>false</organismsDiffer>
    <experiments>2</experiments>
</comment>
<comment type="interaction">
    <interactant intactId="EBI-6144053">
        <id>Q14995</id>
    </interactant>
    <interactant intactId="EBI-396669">
        <id>Q9Y3C5</id>
        <label>RNF11</label>
    </interactant>
    <organismsDiffer>false</organismsDiffer>
    <experiments>3</experiments>
</comment>
<comment type="interaction">
    <interactant intactId="EBI-6144053">
        <id>Q14995</id>
    </interactant>
    <interactant intactId="EBI-5235340">
        <id>Q7Z699</id>
        <label>SPRED1</label>
    </interactant>
    <organismsDiffer>false</organismsDiffer>
    <experiments>3</experiments>
</comment>
<comment type="interaction">
    <interactant intactId="EBI-6144053">
        <id>Q14995</id>
    </interactant>
    <interactant intactId="EBI-12806590">
        <id>Q86WV8</id>
        <label>TSC1</label>
    </interactant>
    <organismsDiffer>false</organismsDiffer>
    <experiments>3</experiments>
</comment>
<comment type="interaction">
    <interactant intactId="EBI-6144053">
        <id>Q14995</id>
    </interactant>
    <interactant intactId="EBI-741480">
        <id>Q9UMX0</id>
        <label>UBQLN1</label>
    </interactant>
    <organismsDiffer>false</organismsDiffer>
    <experiments>3</experiments>
</comment>
<comment type="interaction">
    <interactant intactId="EBI-6144053">
        <id>Q14995</id>
    </interactant>
    <interactant intactId="EBI-720609">
        <id>O76024</id>
        <label>WFS1</label>
    </interactant>
    <organismsDiffer>false</organismsDiffer>
    <experiments>3</experiments>
</comment>
<comment type="interaction">
    <interactant intactId="EBI-6144053">
        <id>Q14995</id>
    </interactant>
    <interactant intactId="EBI-25900580">
        <id>Q9Y649</id>
    </interactant>
    <organismsDiffer>false</organismsDiffer>
    <experiments>3</experiments>
</comment>
<comment type="interaction">
    <interactant intactId="EBI-6144053">
        <id>Q14995</id>
    </interactant>
    <interactant intactId="EBI-79859">
        <id>O08785</id>
        <label>Clock</label>
    </interactant>
    <organismsDiffer>true</organismsDiffer>
    <experiments>2</experiments>
</comment>
<comment type="subcellular location">
    <subcellularLocation>
        <location evidence="3 9 10">Nucleus</location>
    </subcellularLocation>
    <subcellularLocation>
        <location evidence="2">Cytoplasm</location>
    </subcellularLocation>
    <text evidence="2">Phosphorylation by CSNK1E enhances its cytoplasmic localization.</text>
</comment>
<comment type="tissue specificity">
    <text>Widely expressed. Expressed at high levels in the liver, adipose tissue, skeletal muscle and brain. Expression oscillates diurnally in the suprachiasmatic nucleus (SCN) of the hypothalamus as well as in peripheral tissues.</text>
</comment>
<comment type="domain">
    <text>Composed of three domains: a modulating N-terminal domain, a DNA-binding domain and a C-terminal ligand-binding domain.</text>
</comment>
<comment type="PTM">
    <text evidence="10">Deacetylated by HDAC1. Acetylation and deacetylation regulate its transcriptional regulatory activity.</text>
</comment>
<comment type="PTM">
    <text evidence="12">Under more reducing intracellular redox conditions, Cys-384 is in its heme-bound state, which is optimal for recruitment of the NCOR1/HDAC3 corepressor complex and repression of target genes. When subjected to oxidative stress conditions, Cys-384 undergoes oxidation to form a disulfide bridge with Cys-374, also triggering a ligand switch that results in release of bound heme and derepression of target genes.</text>
</comment>
<comment type="PTM">
    <text evidence="13">Ubiquitinated by SIAH2; leading to proteasomal degradation.</text>
</comment>
<comment type="PTM">
    <text evidence="2">Phosphorylated by CSNK1E; phosphorylation enhances its cytoplasmic localization.</text>
</comment>
<comment type="similarity">
    <text evidence="14">Belongs to the nuclear hormone receptor family. NR1 subfamily.</text>
</comment>
<feature type="chain" id="PRO_0000053501" description="Nuclear receptor subfamily 1 group D member 2">
    <location>
        <begin position="1"/>
        <end position="579"/>
    </location>
</feature>
<feature type="domain" description="NR LBD" evidence="4">
    <location>
        <begin position="369"/>
        <end position="579"/>
    </location>
</feature>
<feature type="DNA-binding region" description="Nuclear receptor" evidence="3">
    <location>
        <begin position="100"/>
        <end position="176"/>
    </location>
</feature>
<feature type="zinc finger region" description="NR C4-type" evidence="3">
    <location>
        <begin position="103"/>
        <end position="123"/>
    </location>
</feature>
<feature type="zinc finger region" description="NR C4-type" evidence="3">
    <location>
        <begin position="140"/>
        <end position="164"/>
    </location>
</feature>
<feature type="region of interest" description="Modulating">
    <location>
        <begin position="1"/>
        <end position="99"/>
    </location>
</feature>
<feature type="region of interest" description="Required for phosphorylation by CSNK1E and cytoplasmic localization" evidence="2">
    <location>
        <begin position="1"/>
        <end position="60"/>
    </location>
</feature>
<feature type="region of interest" description="Disordered" evidence="5">
    <location>
        <begin position="13"/>
        <end position="61"/>
    </location>
</feature>
<feature type="region of interest" description="Disordered" evidence="5">
    <location>
        <begin position="222"/>
        <end position="250"/>
    </location>
</feature>
<feature type="region of interest" description="Interaction with ZNHIT1" evidence="9">
    <location>
        <begin position="397"/>
        <end position="579"/>
    </location>
</feature>
<feature type="compositionally biased region" description="Low complexity" evidence="5">
    <location>
        <begin position="13"/>
        <end position="54"/>
    </location>
</feature>
<feature type="compositionally biased region" description="Basic and acidic residues" evidence="5">
    <location>
        <begin position="227"/>
        <end position="237"/>
    </location>
</feature>
<feature type="binding site">
    <location>
        <position position="384"/>
    </location>
    <ligand>
        <name>heme</name>
        <dbReference type="ChEBI" id="CHEBI:30413"/>
    </ligand>
</feature>
<feature type="binding site">
    <location>
        <position position="568"/>
    </location>
    <ligand>
        <name>heme</name>
        <dbReference type="ChEBI" id="CHEBI:30413"/>
    </ligand>
</feature>
<feature type="modified residue" description="Phosphoserine; by GSK3-beta" evidence="1">
    <location>
        <position position="46"/>
    </location>
</feature>
<feature type="modified residue" description="N6-acetyllysine; by KAT5" evidence="10">
    <location>
        <position position="162"/>
    </location>
</feature>
<feature type="modified residue" description="N6-acetyllysine; by KAT5" evidence="10">
    <location>
        <position position="163"/>
    </location>
</feature>
<feature type="disulfide bond" evidence="12">
    <location>
        <begin position="337"/>
        <end position="343"/>
    </location>
</feature>
<feature type="disulfide bond" evidence="12">
    <location>
        <begin position="374"/>
        <end position="384"/>
    </location>
</feature>
<feature type="sequence variant" id="VAR_047377" description="In dbSNP:rs17854365." evidence="7">
    <original>P</original>
    <variation>H</variation>
    <location>
        <position position="21"/>
    </location>
</feature>
<feature type="sequence variant" id="VAR_047378" description="In dbSNP:rs17857305." evidence="7">
    <original>Q</original>
    <variation>K</variation>
    <location>
        <position position="282"/>
    </location>
</feature>
<feature type="sequence variant" id="VAR_047379" description="In dbSNP:rs17857306." evidence="7">
    <original>P</original>
    <variation>R</variation>
    <location>
        <position position="288"/>
    </location>
</feature>
<feature type="sequence variant" id="VAR_047380" description="In dbSNP:rs4858097.">
    <original>M</original>
    <variation>L</variation>
    <location>
        <position position="386"/>
    </location>
</feature>
<feature type="sequence conflict" description="In Ref. 5; AAA65937." evidence="14" ref="5">
    <original>IE</original>
    <variation>NRK</variation>
    <location>
        <begin position="519"/>
        <end position="520"/>
    </location>
</feature>
<feature type="helix" evidence="17">
    <location>
        <begin position="398"/>
        <end position="420"/>
    </location>
</feature>
<feature type="helix" evidence="17">
    <location>
        <begin position="424"/>
        <end position="428"/>
    </location>
</feature>
<feature type="helix" evidence="17">
    <location>
        <begin position="431"/>
        <end position="449"/>
    </location>
</feature>
<feature type="helix" evidence="17">
    <location>
        <begin position="451"/>
        <end position="453"/>
    </location>
</feature>
<feature type="turn" evidence="17">
    <location>
        <begin position="456"/>
        <end position="459"/>
    </location>
</feature>
<feature type="strand" evidence="17">
    <location>
        <begin position="460"/>
        <end position="462"/>
    </location>
</feature>
<feature type="strand" evidence="17">
    <location>
        <begin position="468"/>
        <end position="470"/>
    </location>
</feature>
<feature type="helix" evidence="17">
    <location>
        <begin position="471"/>
        <end position="476"/>
    </location>
</feature>
<feature type="helix" evidence="17">
    <location>
        <begin position="481"/>
        <end position="495"/>
    </location>
</feature>
<feature type="helix" evidence="17">
    <location>
        <begin position="500"/>
        <end position="512"/>
    </location>
</feature>
<feature type="helix" evidence="16">
    <location>
        <begin position="516"/>
        <end position="518"/>
    </location>
</feature>
<feature type="helix" evidence="17">
    <location>
        <begin position="522"/>
        <end position="543"/>
    </location>
</feature>
<feature type="helix" evidence="17">
    <location>
        <begin position="549"/>
        <end position="573"/>
    </location>
</feature>
<feature type="helix" evidence="18">
    <location>
        <begin position="574"/>
        <end position="576"/>
    </location>
</feature>
<sequence length="579" mass="64643">MEVNAGGVIAYISSSSSASSPASCHSEGSENSFQSSSSSVPSSPNSSNSDTNGNPKNGDLANIEGILKNDRIDCSMKTSKSSAPGMTKSHSGVTKFSGMVLLCKVCGDVASGFHYGVHACEGCKGFFRRSIQQNIQYKKCLKNENCSIMRMNRNRCQQCRFKKCLSVGMSRDAVRFGRIPKREKQRMLIEMQSAMKTMMNSQFSGHLQNDTLVEHHEQTALPAQEQLRPKPQLEQENIKSSSPPSSDFAKEEVIGMVTRAHKDTFMYNQEQQENSAESMQPQRGERIPKNMEQYNLNHDHCGNGLSSHFPCSESQQHLNGQFKGRNIMHYPNGHAICIANGHCMNFSNAYTQRVCDRVPIDGFSQNENKNSYLCNTGGRMHLVCPMSKSPYVDPHKSGHEIWEEFSMSFTPAVKEVVEFAKRIPGFRDLSQHDQVNLLKAGTFEVLMVRFASLFDAKERTVTFLSGKKYSVDDLHSMGAGDLLNSMFEFSEKLNALQLSDEEMSLFTAVVLVSADRSGIENVNSVEALQETLIRALRTLIMKNHPNEASIFTKLLLKLPDLRSLNNMHSEELLAFKVHP</sequence>
<organism>
    <name type="scientific">Homo sapiens</name>
    <name type="common">Human</name>
    <dbReference type="NCBI Taxonomy" id="9606"/>
    <lineage>
        <taxon>Eukaryota</taxon>
        <taxon>Metazoa</taxon>
        <taxon>Chordata</taxon>
        <taxon>Craniata</taxon>
        <taxon>Vertebrata</taxon>
        <taxon>Euteleostomi</taxon>
        <taxon>Mammalia</taxon>
        <taxon>Eutheria</taxon>
        <taxon>Euarchontoglires</taxon>
        <taxon>Primates</taxon>
        <taxon>Haplorrhini</taxon>
        <taxon>Catarrhini</taxon>
        <taxon>Hominidae</taxon>
        <taxon>Homo</taxon>
    </lineage>
</organism>
<dbReference type="EMBL" id="D16815">
    <property type="protein sequence ID" value="BAA20088.1"/>
    <property type="molecule type" value="mRNA"/>
</dbReference>
<dbReference type="EMBL" id="AK313464">
    <property type="protein sequence ID" value="BAG36250.1"/>
    <property type="molecule type" value="mRNA"/>
</dbReference>
<dbReference type="EMBL" id="AC124914">
    <property type="status" value="NOT_ANNOTATED_CDS"/>
    <property type="molecule type" value="Genomic_DNA"/>
</dbReference>
<dbReference type="EMBL" id="BC045613">
    <property type="protein sequence ID" value="AAH45613.1"/>
    <property type="molecule type" value="mRNA"/>
</dbReference>
<dbReference type="EMBL" id="L31785">
    <property type="protein sequence ID" value="AAA65937.1"/>
    <property type="molecule type" value="mRNA"/>
</dbReference>
<dbReference type="CCDS" id="CCDS33718.1"/>
<dbReference type="PIR" id="A57057">
    <property type="entry name" value="A57057"/>
</dbReference>
<dbReference type="RefSeq" id="NP_005117.3">
    <property type="nucleotide sequence ID" value="NM_005126.4"/>
</dbReference>
<dbReference type="PDB" id="2V0V">
    <property type="method" value="X-ray"/>
    <property type="resolution" value="2.40 A"/>
    <property type="chains" value="A/B/C/D=387-579"/>
</dbReference>
<dbReference type="PDB" id="2V7C">
    <property type="method" value="X-ray"/>
    <property type="resolution" value="2.40 A"/>
    <property type="chains" value="A/B=387-579"/>
</dbReference>
<dbReference type="PDB" id="3CQV">
    <property type="method" value="X-ray"/>
    <property type="resolution" value="1.90 A"/>
    <property type="chains" value="A=381-579"/>
</dbReference>
<dbReference type="PDB" id="4N73">
    <property type="method" value="X-ray"/>
    <property type="resolution" value="1.87 A"/>
    <property type="chains" value="A=381-578"/>
</dbReference>
<dbReference type="PDB" id="6WMQ">
    <property type="method" value="X-ray"/>
    <property type="resolution" value="2.55 A"/>
    <property type="chains" value="A/B=381-579"/>
</dbReference>
<dbReference type="PDB" id="6WMS">
    <property type="method" value="X-ray"/>
    <property type="resolution" value="2.00 A"/>
    <property type="chains" value="A/B=381-579"/>
</dbReference>
<dbReference type="PDBsum" id="2V0V"/>
<dbReference type="PDBsum" id="2V7C"/>
<dbReference type="PDBsum" id="3CQV"/>
<dbReference type="PDBsum" id="4N73"/>
<dbReference type="PDBsum" id="6WMQ"/>
<dbReference type="PDBsum" id="6WMS"/>
<dbReference type="SMR" id="Q14995"/>
<dbReference type="BioGRID" id="115299">
    <property type="interactions" value="60"/>
</dbReference>
<dbReference type="FunCoup" id="Q14995">
    <property type="interactions" value="3218"/>
</dbReference>
<dbReference type="IntAct" id="Q14995">
    <property type="interactions" value="30"/>
</dbReference>
<dbReference type="MINT" id="Q14995"/>
<dbReference type="STRING" id="9606.ENSP00000310006"/>
<dbReference type="BindingDB" id="Q14995"/>
<dbReference type="ChEMBL" id="CHEMBL1961784"/>
<dbReference type="DrugBank" id="DB14013">
    <property type="generic name" value="SR-9009"/>
</dbReference>
<dbReference type="DrugBank" id="DB14014">
    <property type="generic name" value="SR-9011"/>
</dbReference>
<dbReference type="GuidetoPHARMACOLOGY" id="597"/>
<dbReference type="GlyGen" id="Q14995">
    <property type="glycosylation" value="2 sites, 1 O-linked glycan (2 sites)"/>
</dbReference>
<dbReference type="iPTMnet" id="Q14995"/>
<dbReference type="PhosphoSitePlus" id="Q14995"/>
<dbReference type="BioMuta" id="NR1D2"/>
<dbReference type="DMDM" id="215274122"/>
<dbReference type="jPOST" id="Q14995"/>
<dbReference type="MassIVE" id="Q14995"/>
<dbReference type="PaxDb" id="9606-ENSP00000310006"/>
<dbReference type="PeptideAtlas" id="Q14995"/>
<dbReference type="ProteomicsDB" id="60285"/>
<dbReference type="ABCD" id="Q14995">
    <property type="antibodies" value="2 sequenced antibodies"/>
</dbReference>
<dbReference type="Antibodypedia" id="11385">
    <property type="antibodies" value="338 antibodies from 31 providers"/>
</dbReference>
<dbReference type="DNASU" id="9975"/>
<dbReference type="Ensembl" id="ENST00000312521.9">
    <property type="protein sequence ID" value="ENSP00000310006.3"/>
    <property type="gene ID" value="ENSG00000174738.14"/>
</dbReference>
<dbReference type="GeneID" id="9975"/>
<dbReference type="KEGG" id="hsa:9975"/>
<dbReference type="MANE-Select" id="ENST00000312521.9">
    <property type="protein sequence ID" value="ENSP00000310006.3"/>
    <property type="RefSeq nucleotide sequence ID" value="NM_005126.5"/>
    <property type="RefSeq protein sequence ID" value="NP_005117.3"/>
</dbReference>
<dbReference type="UCSC" id="uc003ccs.2">
    <property type="organism name" value="human"/>
</dbReference>
<dbReference type="AGR" id="HGNC:7963"/>
<dbReference type="CTD" id="9975"/>
<dbReference type="DisGeNET" id="9975"/>
<dbReference type="GeneCards" id="NR1D2"/>
<dbReference type="HGNC" id="HGNC:7963">
    <property type="gene designation" value="NR1D2"/>
</dbReference>
<dbReference type="HPA" id="ENSG00000174738">
    <property type="expression patterns" value="Low tissue specificity"/>
</dbReference>
<dbReference type="MIM" id="602304">
    <property type="type" value="gene"/>
</dbReference>
<dbReference type="neXtProt" id="NX_Q14995"/>
<dbReference type="OpenTargets" id="ENSG00000174738"/>
<dbReference type="PharmGKB" id="PA31749"/>
<dbReference type="VEuPathDB" id="HostDB:ENSG00000174738"/>
<dbReference type="eggNOG" id="KOG4846">
    <property type="taxonomic scope" value="Eukaryota"/>
</dbReference>
<dbReference type="GeneTree" id="ENSGT00940000155168"/>
<dbReference type="HOGENOM" id="CLU_007368_2_4_1"/>
<dbReference type="InParanoid" id="Q14995"/>
<dbReference type="OMA" id="PASCHSD"/>
<dbReference type="OrthoDB" id="7634782at2759"/>
<dbReference type="PAN-GO" id="Q14995">
    <property type="GO annotations" value="6 GO annotations based on evolutionary models"/>
</dbReference>
<dbReference type="PhylomeDB" id="Q14995"/>
<dbReference type="TreeFam" id="TF328382"/>
<dbReference type="PathwayCommons" id="Q14995"/>
<dbReference type="Reactome" id="R-HSA-383280">
    <property type="pathway name" value="Nuclear Receptor transcription pathway"/>
</dbReference>
<dbReference type="SignaLink" id="Q14995"/>
<dbReference type="SIGNOR" id="Q14995"/>
<dbReference type="BioGRID-ORCS" id="9975">
    <property type="hits" value="14 hits in 1183 CRISPR screens"/>
</dbReference>
<dbReference type="ChiTaRS" id="NR1D2">
    <property type="organism name" value="human"/>
</dbReference>
<dbReference type="EvolutionaryTrace" id="Q14995"/>
<dbReference type="GeneWiki" id="Rev-ErbA_beta"/>
<dbReference type="GenomeRNAi" id="9975"/>
<dbReference type="Pharos" id="Q14995">
    <property type="development level" value="Tchem"/>
</dbReference>
<dbReference type="PRO" id="PR:Q14995"/>
<dbReference type="Proteomes" id="UP000005640">
    <property type="component" value="Chromosome 3"/>
</dbReference>
<dbReference type="RNAct" id="Q14995">
    <property type="molecule type" value="protein"/>
</dbReference>
<dbReference type="Bgee" id="ENSG00000174738">
    <property type="expression patterns" value="Expressed in calcaneal tendon and 211 other cell types or tissues"/>
</dbReference>
<dbReference type="ExpressionAtlas" id="Q14995">
    <property type="expression patterns" value="baseline and differential"/>
</dbReference>
<dbReference type="GO" id="GO:0000785">
    <property type="term" value="C:chromatin"/>
    <property type="evidence" value="ECO:0000247"/>
    <property type="project" value="NTNU_SB"/>
</dbReference>
<dbReference type="GO" id="GO:0005737">
    <property type="term" value="C:cytoplasm"/>
    <property type="evidence" value="ECO:0000250"/>
    <property type="project" value="UniProtKB"/>
</dbReference>
<dbReference type="GO" id="GO:0005654">
    <property type="term" value="C:nucleoplasm"/>
    <property type="evidence" value="ECO:0000314"/>
    <property type="project" value="HPA"/>
</dbReference>
<dbReference type="GO" id="GO:0005634">
    <property type="term" value="C:nucleus"/>
    <property type="evidence" value="ECO:0000314"/>
    <property type="project" value="UniProtKB"/>
</dbReference>
<dbReference type="GO" id="GO:0000981">
    <property type="term" value="F:DNA-binding transcription factor activity, RNA polymerase II-specific"/>
    <property type="evidence" value="ECO:0000247"/>
    <property type="project" value="NTNU_SB"/>
</dbReference>
<dbReference type="GO" id="GO:0001227">
    <property type="term" value="F:DNA-binding transcription repressor activity, RNA polymerase II-specific"/>
    <property type="evidence" value="ECO:0007669"/>
    <property type="project" value="Ensembl"/>
</dbReference>
<dbReference type="GO" id="GO:0004879">
    <property type="term" value="F:nuclear receptor activity"/>
    <property type="evidence" value="ECO:0000318"/>
    <property type="project" value="GO_Central"/>
</dbReference>
<dbReference type="GO" id="GO:0000978">
    <property type="term" value="F:RNA polymerase II cis-regulatory region sequence-specific DNA binding"/>
    <property type="evidence" value="ECO:0000314"/>
    <property type="project" value="UniProtKB"/>
</dbReference>
<dbReference type="GO" id="GO:1990837">
    <property type="term" value="F:sequence-specific double-stranded DNA binding"/>
    <property type="evidence" value="ECO:0000314"/>
    <property type="project" value="ARUK-UCL"/>
</dbReference>
<dbReference type="GO" id="GO:0008270">
    <property type="term" value="F:zinc ion binding"/>
    <property type="evidence" value="ECO:0007669"/>
    <property type="project" value="UniProtKB-KW"/>
</dbReference>
<dbReference type="GO" id="GO:0030154">
    <property type="term" value="P:cell differentiation"/>
    <property type="evidence" value="ECO:0000318"/>
    <property type="project" value="GO_Central"/>
</dbReference>
<dbReference type="GO" id="GO:0048512">
    <property type="term" value="P:circadian behavior"/>
    <property type="evidence" value="ECO:0000250"/>
    <property type="project" value="UniProtKB"/>
</dbReference>
<dbReference type="GO" id="GO:0097009">
    <property type="term" value="P:energy homeostasis"/>
    <property type="evidence" value="ECO:0000250"/>
    <property type="project" value="UniProtKB"/>
</dbReference>
<dbReference type="GO" id="GO:0009755">
    <property type="term" value="P:hormone-mediated signaling pathway"/>
    <property type="evidence" value="ECO:0000318"/>
    <property type="project" value="GO_Central"/>
</dbReference>
<dbReference type="GO" id="GO:0030522">
    <property type="term" value="P:intracellular receptor signaling pathway"/>
    <property type="evidence" value="ECO:0000318"/>
    <property type="project" value="GO_Central"/>
</dbReference>
<dbReference type="GO" id="GO:0055088">
    <property type="term" value="P:lipid homeostasis"/>
    <property type="evidence" value="ECO:0000250"/>
    <property type="project" value="UniProtKB"/>
</dbReference>
<dbReference type="GO" id="GO:0045892">
    <property type="term" value="P:negative regulation of DNA-templated transcription"/>
    <property type="evidence" value="ECO:0000314"/>
    <property type="project" value="UniProtKB"/>
</dbReference>
<dbReference type="GO" id="GO:0050728">
    <property type="term" value="P:negative regulation of inflammatory response"/>
    <property type="evidence" value="ECO:0007669"/>
    <property type="project" value="Ensembl"/>
</dbReference>
<dbReference type="GO" id="GO:0000122">
    <property type="term" value="P:negative regulation of transcription by RNA polymerase II"/>
    <property type="evidence" value="ECO:0000318"/>
    <property type="project" value="GO_Central"/>
</dbReference>
<dbReference type="GO" id="GO:0045893">
    <property type="term" value="P:positive regulation of DNA-templated transcription"/>
    <property type="evidence" value="ECO:0000250"/>
    <property type="project" value="UniProtKB"/>
</dbReference>
<dbReference type="GO" id="GO:0045944">
    <property type="term" value="P:positive regulation of transcription by RNA polymerase II"/>
    <property type="evidence" value="ECO:0000318"/>
    <property type="project" value="GO_Central"/>
</dbReference>
<dbReference type="GO" id="GO:0042752">
    <property type="term" value="P:regulation of circadian rhythm"/>
    <property type="evidence" value="ECO:0000250"/>
    <property type="project" value="UniProtKB"/>
</dbReference>
<dbReference type="GO" id="GO:0006355">
    <property type="term" value="P:regulation of DNA-templated transcription"/>
    <property type="evidence" value="ECO:0000304"/>
    <property type="project" value="UniProtKB"/>
</dbReference>
<dbReference type="GO" id="GO:0050727">
    <property type="term" value="P:regulation of inflammatory response"/>
    <property type="evidence" value="ECO:0000250"/>
    <property type="project" value="UniProtKB"/>
</dbReference>
<dbReference type="GO" id="GO:0019216">
    <property type="term" value="P:regulation of lipid metabolic process"/>
    <property type="evidence" value="ECO:0000250"/>
    <property type="project" value="UniProtKB"/>
</dbReference>
<dbReference type="GO" id="GO:2001014">
    <property type="term" value="P:regulation of skeletal muscle cell differentiation"/>
    <property type="evidence" value="ECO:0000250"/>
    <property type="project" value="UniProtKB"/>
</dbReference>
<dbReference type="CDD" id="cd07166">
    <property type="entry name" value="NR_DBD_REV_ERB"/>
    <property type="match status" value="1"/>
</dbReference>
<dbReference type="CDD" id="cd06940">
    <property type="entry name" value="NR_LBD_REV_ERB"/>
    <property type="match status" value="1"/>
</dbReference>
<dbReference type="DisProt" id="DP02702"/>
<dbReference type="FunFam" id="1.10.565.10:FF:000016">
    <property type="entry name" value="Nuclear receptor subfamily 1 group D member 2"/>
    <property type="match status" value="1"/>
</dbReference>
<dbReference type="FunFam" id="3.30.50.10:FF:000013">
    <property type="entry name" value="Nuclear receptor subfamily 1 group D member 2"/>
    <property type="match status" value="1"/>
</dbReference>
<dbReference type="Gene3D" id="3.30.50.10">
    <property type="entry name" value="Erythroid Transcription Factor GATA-1, subunit A"/>
    <property type="match status" value="1"/>
</dbReference>
<dbReference type="Gene3D" id="1.10.565.10">
    <property type="entry name" value="Retinoid X Receptor"/>
    <property type="match status" value="1"/>
</dbReference>
<dbReference type="InterPro" id="IPR035500">
    <property type="entry name" value="NHR-like_dom_sf"/>
</dbReference>
<dbReference type="InterPro" id="IPR000536">
    <property type="entry name" value="Nucl_hrmn_rcpt_lig-bd"/>
</dbReference>
<dbReference type="InterPro" id="IPR050234">
    <property type="entry name" value="Nuclear_hormone_rcpt_NR1"/>
</dbReference>
<dbReference type="InterPro" id="IPR001723">
    <property type="entry name" value="Nuclear_hrmn_rcpt"/>
</dbReference>
<dbReference type="InterPro" id="IPR001628">
    <property type="entry name" value="Znf_hrmn_rcpt"/>
</dbReference>
<dbReference type="InterPro" id="IPR013088">
    <property type="entry name" value="Znf_NHR/GATA"/>
</dbReference>
<dbReference type="PANTHER" id="PTHR24082">
    <property type="entry name" value="NUCLEAR HORMONE RECEPTOR"/>
    <property type="match status" value="1"/>
</dbReference>
<dbReference type="PANTHER" id="PTHR24082:SF112">
    <property type="entry name" value="NUCLEAR RECEPTOR SUBFAMILY 1 GROUP D MEMBER 2"/>
    <property type="match status" value="1"/>
</dbReference>
<dbReference type="Pfam" id="PF00104">
    <property type="entry name" value="Hormone_recep"/>
    <property type="match status" value="1"/>
</dbReference>
<dbReference type="Pfam" id="PF00105">
    <property type="entry name" value="zf-C4"/>
    <property type="match status" value="1"/>
</dbReference>
<dbReference type="PRINTS" id="PR00398">
    <property type="entry name" value="STRDHORMONER"/>
</dbReference>
<dbReference type="PRINTS" id="PR00047">
    <property type="entry name" value="STROIDFINGER"/>
</dbReference>
<dbReference type="SMART" id="SM00430">
    <property type="entry name" value="HOLI"/>
    <property type="match status" value="1"/>
</dbReference>
<dbReference type="SMART" id="SM00399">
    <property type="entry name" value="ZnF_C4"/>
    <property type="match status" value="1"/>
</dbReference>
<dbReference type="SUPFAM" id="SSF57716">
    <property type="entry name" value="Glucocorticoid receptor-like (DNA-binding domain)"/>
    <property type="match status" value="1"/>
</dbReference>
<dbReference type="SUPFAM" id="SSF48508">
    <property type="entry name" value="Nuclear receptor ligand-binding domain"/>
    <property type="match status" value="1"/>
</dbReference>
<dbReference type="PROSITE" id="PS51843">
    <property type="entry name" value="NR_LBD"/>
    <property type="match status" value="1"/>
</dbReference>
<dbReference type="PROSITE" id="PS00031">
    <property type="entry name" value="NUCLEAR_REC_DBD_1"/>
    <property type="match status" value="1"/>
</dbReference>
<dbReference type="PROSITE" id="PS51030">
    <property type="entry name" value="NUCLEAR_REC_DBD_2"/>
    <property type="match status" value="1"/>
</dbReference>
<accession>Q14995</accession>
<accession>B2R8Q3</accession>
<accession>O00402</accession>
<accession>Q86XD4</accession>
<reference key="1">
    <citation type="submission" date="1993-07" db="EMBL/GenBank/DDBJ databases">
        <title>Isolation of a novel member of the thyroid/steroid hormone receptor superfamily from human osteoblastic osteosarcoma HOS cell.</title>
        <authorList>
            <person name="Kamizono A."/>
            <person name="Shuichiro K."/>
            <person name="Kohei U."/>
        </authorList>
    </citation>
    <scope>NUCLEOTIDE SEQUENCE [MRNA]</scope>
</reference>
<reference key="2">
    <citation type="journal article" date="2004" name="Nat. Genet.">
        <title>Complete sequencing and characterization of 21,243 full-length human cDNAs.</title>
        <authorList>
            <person name="Ota T."/>
            <person name="Suzuki Y."/>
            <person name="Nishikawa T."/>
            <person name="Otsuki T."/>
            <person name="Sugiyama T."/>
            <person name="Irie R."/>
            <person name="Wakamatsu A."/>
            <person name="Hayashi K."/>
            <person name="Sato H."/>
            <person name="Nagai K."/>
            <person name="Kimura K."/>
            <person name="Makita H."/>
            <person name="Sekine M."/>
            <person name="Obayashi M."/>
            <person name="Nishi T."/>
            <person name="Shibahara T."/>
            <person name="Tanaka T."/>
            <person name="Ishii S."/>
            <person name="Yamamoto J."/>
            <person name="Saito K."/>
            <person name="Kawai Y."/>
            <person name="Isono Y."/>
            <person name="Nakamura Y."/>
            <person name="Nagahari K."/>
            <person name="Murakami K."/>
            <person name="Yasuda T."/>
            <person name="Iwayanagi T."/>
            <person name="Wagatsuma M."/>
            <person name="Shiratori A."/>
            <person name="Sudo H."/>
            <person name="Hosoiri T."/>
            <person name="Kaku Y."/>
            <person name="Kodaira H."/>
            <person name="Kondo H."/>
            <person name="Sugawara M."/>
            <person name="Takahashi M."/>
            <person name="Kanda K."/>
            <person name="Yokoi T."/>
            <person name="Furuya T."/>
            <person name="Kikkawa E."/>
            <person name="Omura Y."/>
            <person name="Abe K."/>
            <person name="Kamihara K."/>
            <person name="Katsuta N."/>
            <person name="Sato K."/>
            <person name="Tanikawa M."/>
            <person name="Yamazaki M."/>
            <person name="Ninomiya K."/>
            <person name="Ishibashi T."/>
            <person name="Yamashita H."/>
            <person name="Murakawa K."/>
            <person name="Fujimori K."/>
            <person name="Tanai H."/>
            <person name="Kimata M."/>
            <person name="Watanabe M."/>
            <person name="Hiraoka S."/>
            <person name="Chiba Y."/>
            <person name="Ishida S."/>
            <person name="Ono Y."/>
            <person name="Takiguchi S."/>
            <person name="Watanabe S."/>
            <person name="Yosida M."/>
            <person name="Hotuta T."/>
            <person name="Kusano J."/>
            <person name="Kanehori K."/>
            <person name="Takahashi-Fujii A."/>
            <person name="Hara H."/>
            <person name="Tanase T.-O."/>
            <person name="Nomura Y."/>
            <person name="Togiya S."/>
            <person name="Komai F."/>
            <person name="Hara R."/>
            <person name="Takeuchi K."/>
            <person name="Arita M."/>
            <person name="Imose N."/>
            <person name="Musashino K."/>
            <person name="Yuuki H."/>
            <person name="Oshima A."/>
            <person name="Sasaki N."/>
            <person name="Aotsuka S."/>
            <person name="Yoshikawa Y."/>
            <person name="Matsunawa H."/>
            <person name="Ichihara T."/>
            <person name="Shiohata N."/>
            <person name="Sano S."/>
            <person name="Moriya S."/>
            <person name="Momiyama H."/>
            <person name="Satoh N."/>
            <person name="Takami S."/>
            <person name="Terashima Y."/>
            <person name="Suzuki O."/>
            <person name="Nakagawa S."/>
            <person name="Senoh A."/>
            <person name="Mizoguchi H."/>
            <person name="Goto Y."/>
            <person name="Shimizu F."/>
            <person name="Wakebe H."/>
            <person name="Hishigaki H."/>
            <person name="Watanabe T."/>
            <person name="Sugiyama A."/>
            <person name="Takemoto M."/>
            <person name="Kawakami B."/>
            <person name="Yamazaki M."/>
            <person name="Watanabe K."/>
            <person name="Kumagai A."/>
            <person name="Itakura S."/>
            <person name="Fukuzumi Y."/>
            <person name="Fujimori Y."/>
            <person name="Komiyama M."/>
            <person name="Tashiro H."/>
            <person name="Tanigami A."/>
            <person name="Fujiwara T."/>
            <person name="Ono T."/>
            <person name="Yamada K."/>
            <person name="Fujii Y."/>
            <person name="Ozaki K."/>
            <person name="Hirao M."/>
            <person name="Ohmori Y."/>
            <person name="Kawabata A."/>
            <person name="Hikiji T."/>
            <person name="Kobatake N."/>
            <person name="Inagaki H."/>
            <person name="Ikema Y."/>
            <person name="Okamoto S."/>
            <person name="Okitani R."/>
            <person name="Kawakami T."/>
            <person name="Noguchi S."/>
            <person name="Itoh T."/>
            <person name="Shigeta K."/>
            <person name="Senba T."/>
            <person name="Matsumura K."/>
            <person name="Nakajima Y."/>
            <person name="Mizuno T."/>
            <person name="Morinaga M."/>
            <person name="Sasaki M."/>
            <person name="Togashi T."/>
            <person name="Oyama M."/>
            <person name="Hata H."/>
            <person name="Watanabe M."/>
            <person name="Komatsu T."/>
            <person name="Mizushima-Sugano J."/>
            <person name="Satoh T."/>
            <person name="Shirai Y."/>
            <person name="Takahashi Y."/>
            <person name="Nakagawa K."/>
            <person name="Okumura K."/>
            <person name="Nagase T."/>
            <person name="Nomura N."/>
            <person name="Kikuchi H."/>
            <person name="Masuho Y."/>
            <person name="Yamashita R."/>
            <person name="Nakai K."/>
            <person name="Yada T."/>
            <person name="Nakamura Y."/>
            <person name="Ohara O."/>
            <person name="Isogai T."/>
            <person name="Sugano S."/>
        </authorList>
    </citation>
    <scope>NUCLEOTIDE SEQUENCE [LARGE SCALE MRNA]</scope>
    <source>
        <tissue>Hippocampus</tissue>
    </source>
</reference>
<reference key="3">
    <citation type="journal article" date="2006" name="Nature">
        <title>The DNA sequence, annotation and analysis of human chromosome 3.</title>
        <authorList>
            <person name="Muzny D.M."/>
            <person name="Scherer S.E."/>
            <person name="Kaul R."/>
            <person name="Wang J."/>
            <person name="Yu J."/>
            <person name="Sudbrak R."/>
            <person name="Buhay C.J."/>
            <person name="Chen R."/>
            <person name="Cree A."/>
            <person name="Ding Y."/>
            <person name="Dugan-Rocha S."/>
            <person name="Gill R."/>
            <person name="Gunaratne P."/>
            <person name="Harris R.A."/>
            <person name="Hawes A.C."/>
            <person name="Hernandez J."/>
            <person name="Hodgson A.V."/>
            <person name="Hume J."/>
            <person name="Jackson A."/>
            <person name="Khan Z.M."/>
            <person name="Kovar-Smith C."/>
            <person name="Lewis L.R."/>
            <person name="Lozado R.J."/>
            <person name="Metzker M.L."/>
            <person name="Milosavljevic A."/>
            <person name="Miner G.R."/>
            <person name="Morgan M.B."/>
            <person name="Nazareth L.V."/>
            <person name="Scott G."/>
            <person name="Sodergren E."/>
            <person name="Song X.-Z."/>
            <person name="Steffen D."/>
            <person name="Wei S."/>
            <person name="Wheeler D.A."/>
            <person name="Wright M.W."/>
            <person name="Worley K.C."/>
            <person name="Yuan Y."/>
            <person name="Zhang Z."/>
            <person name="Adams C.Q."/>
            <person name="Ansari-Lari M.A."/>
            <person name="Ayele M."/>
            <person name="Brown M.J."/>
            <person name="Chen G."/>
            <person name="Chen Z."/>
            <person name="Clendenning J."/>
            <person name="Clerc-Blankenburg K.P."/>
            <person name="Chen R."/>
            <person name="Chen Z."/>
            <person name="Davis C."/>
            <person name="Delgado O."/>
            <person name="Dinh H.H."/>
            <person name="Dong W."/>
            <person name="Draper H."/>
            <person name="Ernst S."/>
            <person name="Fu G."/>
            <person name="Gonzalez-Garay M.L."/>
            <person name="Garcia D.K."/>
            <person name="Gillett W."/>
            <person name="Gu J."/>
            <person name="Hao B."/>
            <person name="Haugen E."/>
            <person name="Havlak P."/>
            <person name="He X."/>
            <person name="Hennig S."/>
            <person name="Hu S."/>
            <person name="Huang W."/>
            <person name="Jackson L.R."/>
            <person name="Jacob L.S."/>
            <person name="Kelly S.H."/>
            <person name="Kube M."/>
            <person name="Levy R."/>
            <person name="Li Z."/>
            <person name="Liu B."/>
            <person name="Liu J."/>
            <person name="Liu W."/>
            <person name="Lu J."/>
            <person name="Maheshwari M."/>
            <person name="Nguyen B.-V."/>
            <person name="Okwuonu G.O."/>
            <person name="Palmeiri A."/>
            <person name="Pasternak S."/>
            <person name="Perez L.M."/>
            <person name="Phelps K.A."/>
            <person name="Plopper F.J."/>
            <person name="Qiang B."/>
            <person name="Raymond C."/>
            <person name="Rodriguez R."/>
            <person name="Saenphimmachak C."/>
            <person name="Santibanez J."/>
            <person name="Shen H."/>
            <person name="Shen Y."/>
            <person name="Subramanian S."/>
            <person name="Tabor P.E."/>
            <person name="Verduzco D."/>
            <person name="Waldron L."/>
            <person name="Wang J."/>
            <person name="Wang J."/>
            <person name="Wang Q."/>
            <person name="Williams G.A."/>
            <person name="Wong G.K.-S."/>
            <person name="Yao Z."/>
            <person name="Zhang J."/>
            <person name="Zhang X."/>
            <person name="Zhao G."/>
            <person name="Zhou J."/>
            <person name="Zhou Y."/>
            <person name="Nelson D."/>
            <person name="Lehrach H."/>
            <person name="Reinhardt R."/>
            <person name="Naylor S.L."/>
            <person name="Yang H."/>
            <person name="Olson M."/>
            <person name="Weinstock G."/>
            <person name="Gibbs R.A."/>
        </authorList>
    </citation>
    <scope>NUCLEOTIDE SEQUENCE [LARGE SCALE GENOMIC DNA]</scope>
</reference>
<reference key="4">
    <citation type="journal article" date="2004" name="Genome Res.">
        <title>The status, quality, and expansion of the NIH full-length cDNA project: the Mammalian Gene Collection (MGC).</title>
        <authorList>
            <consortium name="The MGC Project Team"/>
        </authorList>
    </citation>
    <scope>NUCLEOTIDE SEQUENCE [LARGE SCALE MRNA]</scope>
    <scope>VARIANTS HIS-21; LYS-282 AND ARG-288</scope>
    <source>
        <tissue>Brain</tissue>
    </source>
</reference>
<reference key="5">
    <citation type="journal article" date="1994" name="Mol. Endocrinol.">
        <title>A new orphan member of the nuclear hormone receptor superfamily closely related to Rev-Erb.</title>
        <authorList>
            <person name="Dumas B."/>
            <person name="Harding H.P."/>
            <person name="Choi H.-S."/>
            <person name="Lehmann K.A."/>
            <person name="Chung M."/>
            <person name="Lazar M.A."/>
            <person name="Moore D.D."/>
        </authorList>
    </citation>
    <scope>NUCLEOTIDE SEQUENCE [MRNA] OF 2-579</scope>
    <source>
        <tissue>Peripheral blood lymphocyte</tissue>
    </source>
</reference>
<reference key="6">
    <citation type="journal article" date="2001" name="Mol. Cell. Biol.">
        <title>CIA, a novel estrogen receptor coactivator with a bifunctional nuclear receptor interacting determinant.</title>
        <authorList>
            <person name="Sauve F."/>
            <person name="McBroom L.D.B."/>
            <person name="Gallant J."/>
            <person name="Moraitis A.N."/>
            <person name="Labrie F."/>
            <person name="Giguere V."/>
        </authorList>
    </citation>
    <scope>INTERACTION WITH NCOA5</scope>
</reference>
<reference key="7">
    <citation type="journal article" date="2007" name="FEBS J.">
        <title>A zinc finger HIT domain-containing protein, ZNHIT-1, interacts with orphan nuclear hormone receptor Rev-erbbeta and removes Rev-erbbeta-induced inhibition of apoCIII transcription.</title>
        <authorList>
            <person name="Wang J."/>
            <person name="Li Y."/>
            <person name="Zhang M."/>
            <person name="Liu Z."/>
            <person name="Wu C."/>
            <person name="Yuan H."/>
            <person name="Li Y.Y."/>
            <person name="Zhao X."/>
            <person name="Lu H."/>
        </authorList>
    </citation>
    <scope>FUNCTION</scope>
    <scope>INTERACTION WITH ZNHIT1</scope>
    <scope>SUBCELLULAR LOCATION</scope>
</reference>
<reference key="8">
    <citation type="journal article" date="2008" name="Biochim. Biophys. Acta">
        <title>The orphan nuclear receptor Rev-erbbeta recruits Tip60 and HDAC1 to regulate apolipoprotein CIII promoter.</title>
        <authorList>
            <person name="Wang J."/>
            <person name="Liu N."/>
            <person name="Liu Z."/>
            <person name="Li Y."/>
            <person name="Song C."/>
            <person name="Yuan H."/>
            <person name="Li Y.Y."/>
            <person name="Zhao X."/>
            <person name="Lu H."/>
        </authorList>
    </citation>
    <scope>FUNCTION</scope>
    <scope>INTERACTION WITH KAT5 AND HDAC1</scope>
    <scope>SUBCELLULAR LOCATION</scope>
    <scope>ACETYLATION AT LYS-162 AND LYS-163</scope>
</reference>
<reference key="9">
    <citation type="journal article" date="2011" name="J. Biol. Chem.">
        <title>Thiol-disulfide redox dependence of heme binding and heme ligand switching in nuclear hormone receptor rev-erb{beta}.</title>
        <authorList>
            <person name="Gupta N."/>
            <person name="Ragsdale S.W."/>
        </authorList>
    </citation>
    <scope>HEME-BINDING</scope>
    <scope>DISULFIDE BONDS</scope>
</reference>
<reference key="10">
    <citation type="journal article" date="2012" name="Cell Metab.">
        <title>REV-ERBs: more than the sum of the individual parts.</title>
        <authorList>
            <person name="Stratmann M."/>
            <person name="Schibler U."/>
        </authorList>
    </citation>
    <scope>REVIEW</scope>
</reference>
<reference key="11">
    <citation type="journal article" date="2012" name="Cell Res.">
        <title>REV-ERB-erating nuclear receptor functions in circadian metabolism and physiology.</title>
        <authorList>
            <person name="Ripperger J.A."/>
            <person name="Albrecht U."/>
        </authorList>
    </citation>
    <scope>REVIEW</scope>
</reference>
<reference key="12">
    <citation type="journal article" date="2015" name="Proc. Natl. Acad. Sci. U.S.A.">
        <title>Ubiquitin ligase Siah2 regulates RevErbalpha degradation and the mammalian circadian clock.</title>
        <authorList>
            <person name="DeBruyne J.P."/>
            <person name="Baggs J.E."/>
            <person name="Sato T.K."/>
            <person name="Hogenesch J.B."/>
        </authorList>
    </citation>
    <scope>UBIQUITINATION</scope>
    <scope>PROTEASOMAL DEGRADATION</scope>
    <scope>INTERACTION WITH SIAH2</scope>
</reference>
<reference key="13">
    <citation type="journal article" date="2007" name="J. Mol. Biol.">
        <title>Structural insight into the constitutive repression function of the nuclear receptor Rev-erbbeta.</title>
        <authorList>
            <person name="Woo E.-J."/>
            <person name="Jeong D.G."/>
            <person name="Lim M.-Y."/>
            <person name="Jun Kim S."/>
            <person name="Kim K.-J."/>
            <person name="Yoon S.-M."/>
            <person name="Park B.-C."/>
            <person name="Eon Ryu S."/>
        </authorList>
    </citation>
    <scope>X-RAY CRYSTALLOGRAPHY (2.4 ANGSTROMS) OF 386-579</scope>
    <scope>SUBUNIT</scope>
</reference>
<reference key="14">
    <citation type="journal article" date="2009" name="PLoS Biol.">
        <title>The structural basis of gas-responsive transcription by the human nuclear hormone receptor REV-ERBbeta.</title>
        <authorList>
            <person name="Pardee K.I."/>
            <person name="Xu X."/>
            <person name="Reinking J."/>
            <person name="Schuetz A."/>
            <person name="Dong A."/>
            <person name="Liu S."/>
            <person name="Zhang R."/>
            <person name="Tiefenbach J."/>
            <person name="Lajoie G."/>
            <person name="Plotnikov A.N."/>
            <person name="Botchkarev A."/>
            <person name="Krause H.M."/>
            <person name="Edwards A."/>
        </authorList>
    </citation>
    <scope>X-RAY CRYSTALLOGRAPHY (1.90 ANGSTROMS) OF 381-579</scope>
    <scope>HEME-BINDING</scope>
    <scope>ACTIVITY REGULATION</scope>
</reference>
<gene>
    <name evidence="15" type="primary">NR1D2</name>
</gene>
<evidence type="ECO:0000250" key="1"/>
<evidence type="ECO:0000250" key="2">
    <source>
        <dbReference type="UniProtKB" id="Q60674"/>
    </source>
</evidence>
<evidence type="ECO:0000255" key="3">
    <source>
        <dbReference type="PROSITE-ProRule" id="PRU00407"/>
    </source>
</evidence>
<evidence type="ECO:0000255" key="4">
    <source>
        <dbReference type="PROSITE-ProRule" id="PRU01189"/>
    </source>
</evidence>
<evidence type="ECO:0000256" key="5">
    <source>
        <dbReference type="SAM" id="MobiDB-lite"/>
    </source>
</evidence>
<evidence type="ECO:0000269" key="6">
    <source>
    </source>
</evidence>
<evidence type="ECO:0000269" key="7">
    <source>
    </source>
</evidence>
<evidence type="ECO:0000269" key="8">
    <source>
    </source>
</evidence>
<evidence type="ECO:0000269" key="9">
    <source>
    </source>
</evidence>
<evidence type="ECO:0000269" key="10">
    <source>
    </source>
</evidence>
<evidence type="ECO:0000269" key="11">
    <source>
    </source>
</evidence>
<evidence type="ECO:0000269" key="12">
    <source>
    </source>
</evidence>
<evidence type="ECO:0000269" key="13">
    <source>
    </source>
</evidence>
<evidence type="ECO:0000305" key="14"/>
<evidence type="ECO:0000312" key="15">
    <source>
        <dbReference type="HGNC" id="HGNC:7963"/>
    </source>
</evidence>
<evidence type="ECO:0007829" key="16">
    <source>
        <dbReference type="PDB" id="2V0V"/>
    </source>
</evidence>
<evidence type="ECO:0007829" key="17">
    <source>
        <dbReference type="PDB" id="4N73"/>
    </source>
</evidence>
<evidence type="ECO:0007829" key="18">
    <source>
        <dbReference type="PDB" id="6WMQ"/>
    </source>
</evidence>